<gene>
    <name type="primary">kif11</name>
    <name type="ORF">DDB_G0291039</name>
</gene>
<name>KIF11_DICDI</name>
<dbReference type="EMBL" id="AY484464">
    <property type="protein sequence ID" value="AAR39440.1"/>
    <property type="molecule type" value="Genomic_DNA"/>
</dbReference>
<dbReference type="EMBL" id="AAFI02000174">
    <property type="protein sequence ID" value="EAL61950.1"/>
    <property type="molecule type" value="Genomic_DNA"/>
</dbReference>
<dbReference type="RefSeq" id="XP_635435.1">
    <property type="nucleotide sequence ID" value="XM_630343.1"/>
</dbReference>
<dbReference type="SMR" id="Q6S001"/>
<dbReference type="FunCoup" id="Q6S001">
    <property type="interactions" value="24"/>
</dbReference>
<dbReference type="STRING" id="44689.Q6S001"/>
<dbReference type="PaxDb" id="44689-DDB0201556"/>
<dbReference type="EnsemblProtists" id="EAL61950">
    <property type="protein sequence ID" value="EAL61950"/>
    <property type="gene ID" value="DDB_G0291039"/>
</dbReference>
<dbReference type="GeneID" id="8627935"/>
<dbReference type="KEGG" id="ddi:DDB_G0291039"/>
<dbReference type="dictyBase" id="DDB_G0291039">
    <property type="gene designation" value="kif11"/>
</dbReference>
<dbReference type="VEuPathDB" id="AmoebaDB:DDB_G0291039"/>
<dbReference type="eggNOG" id="KOG0242">
    <property type="taxonomic scope" value="Eukaryota"/>
</dbReference>
<dbReference type="HOGENOM" id="CLU_001485_24_1_1"/>
<dbReference type="InParanoid" id="Q6S001"/>
<dbReference type="OMA" id="NNFEESH"/>
<dbReference type="PhylomeDB" id="Q6S001"/>
<dbReference type="PRO" id="PR:Q6S001"/>
<dbReference type="Proteomes" id="UP000002195">
    <property type="component" value="Chromosome 5"/>
</dbReference>
<dbReference type="GO" id="GO:0005737">
    <property type="term" value="C:cytoplasm"/>
    <property type="evidence" value="ECO:0000318"/>
    <property type="project" value="GO_Central"/>
</dbReference>
<dbReference type="GO" id="GO:0005871">
    <property type="term" value="C:kinesin complex"/>
    <property type="evidence" value="ECO:0000318"/>
    <property type="project" value="GO_Central"/>
</dbReference>
<dbReference type="GO" id="GO:0005874">
    <property type="term" value="C:microtubule"/>
    <property type="evidence" value="ECO:0000318"/>
    <property type="project" value="GO_Central"/>
</dbReference>
<dbReference type="GO" id="GO:0035371">
    <property type="term" value="C:microtubule plus-end"/>
    <property type="evidence" value="ECO:0000314"/>
    <property type="project" value="dictyBase"/>
</dbReference>
<dbReference type="GO" id="GO:0005876">
    <property type="term" value="C:spindle microtubule"/>
    <property type="evidence" value="ECO:0000314"/>
    <property type="project" value="dictyBase"/>
</dbReference>
<dbReference type="GO" id="GO:0005524">
    <property type="term" value="F:ATP binding"/>
    <property type="evidence" value="ECO:0007669"/>
    <property type="project" value="UniProtKB-KW"/>
</dbReference>
<dbReference type="GO" id="GO:0016887">
    <property type="term" value="F:ATP hydrolysis activity"/>
    <property type="evidence" value="ECO:0000318"/>
    <property type="project" value="GO_Central"/>
</dbReference>
<dbReference type="GO" id="GO:0008017">
    <property type="term" value="F:microtubule binding"/>
    <property type="evidence" value="ECO:0000318"/>
    <property type="project" value="GO_Central"/>
</dbReference>
<dbReference type="GO" id="GO:0003777">
    <property type="term" value="F:microtubule motor activity"/>
    <property type="evidence" value="ECO:0000314"/>
    <property type="project" value="dictyBase"/>
</dbReference>
<dbReference type="GO" id="GO:0007018">
    <property type="term" value="P:microtubule-based movement"/>
    <property type="evidence" value="ECO:0000318"/>
    <property type="project" value="GO_Central"/>
</dbReference>
<dbReference type="CDD" id="cd01374">
    <property type="entry name" value="KISc_CENP_E"/>
    <property type="match status" value="1"/>
</dbReference>
<dbReference type="Gene3D" id="3.40.850.10">
    <property type="entry name" value="Kinesin motor domain"/>
    <property type="match status" value="1"/>
</dbReference>
<dbReference type="InterPro" id="IPR027640">
    <property type="entry name" value="Kinesin-like_fam"/>
</dbReference>
<dbReference type="InterPro" id="IPR019821">
    <property type="entry name" value="Kinesin_motor_CS"/>
</dbReference>
<dbReference type="InterPro" id="IPR001752">
    <property type="entry name" value="Kinesin_motor_dom"/>
</dbReference>
<dbReference type="InterPro" id="IPR036961">
    <property type="entry name" value="Kinesin_motor_dom_sf"/>
</dbReference>
<dbReference type="InterPro" id="IPR027417">
    <property type="entry name" value="P-loop_NTPase"/>
</dbReference>
<dbReference type="PANTHER" id="PTHR47968">
    <property type="entry name" value="CENTROMERE PROTEIN E"/>
    <property type="match status" value="1"/>
</dbReference>
<dbReference type="PANTHER" id="PTHR47968:SF33">
    <property type="entry name" value="KINESIN-LIKE PROTEIN KIN-7C, MITOCHONDRIAL ISOFORM X1"/>
    <property type="match status" value="1"/>
</dbReference>
<dbReference type="Pfam" id="PF00225">
    <property type="entry name" value="Kinesin"/>
    <property type="match status" value="1"/>
</dbReference>
<dbReference type="PRINTS" id="PR00380">
    <property type="entry name" value="KINESINHEAVY"/>
</dbReference>
<dbReference type="SMART" id="SM00129">
    <property type="entry name" value="KISc"/>
    <property type="match status" value="1"/>
</dbReference>
<dbReference type="SUPFAM" id="SSF52540">
    <property type="entry name" value="P-loop containing nucleoside triphosphate hydrolases"/>
    <property type="match status" value="1"/>
</dbReference>
<dbReference type="PROSITE" id="PS00411">
    <property type="entry name" value="KINESIN_MOTOR_1"/>
    <property type="match status" value="1"/>
</dbReference>
<dbReference type="PROSITE" id="PS50067">
    <property type="entry name" value="KINESIN_MOTOR_2"/>
    <property type="match status" value="1"/>
</dbReference>
<feature type="chain" id="PRO_0000365586" description="Kinesin-related protein 11">
    <location>
        <begin position="1"/>
        <end position="685"/>
    </location>
</feature>
<feature type="domain" description="Kinesin motor" evidence="3">
    <location>
        <begin position="4"/>
        <end position="405"/>
    </location>
</feature>
<feature type="region of interest" description="Disordered" evidence="4">
    <location>
        <begin position="36"/>
        <end position="105"/>
    </location>
</feature>
<feature type="region of interest" description="Disordered" evidence="4">
    <location>
        <begin position="495"/>
        <end position="568"/>
    </location>
</feature>
<feature type="coiled-coil region" evidence="2">
    <location>
        <begin position="411"/>
        <end position="488"/>
    </location>
</feature>
<feature type="coiled-coil region" evidence="2">
    <location>
        <begin position="574"/>
        <end position="683"/>
    </location>
</feature>
<feature type="compositionally biased region" description="Low complexity" evidence="4">
    <location>
        <begin position="47"/>
        <end position="105"/>
    </location>
</feature>
<feature type="compositionally biased region" description="Polar residues" evidence="4">
    <location>
        <begin position="511"/>
        <end position="520"/>
    </location>
</feature>
<feature type="compositionally biased region" description="Low complexity" evidence="4">
    <location>
        <begin position="533"/>
        <end position="565"/>
    </location>
</feature>
<feature type="binding site" evidence="3">
    <location>
        <begin position="156"/>
        <end position="163"/>
    </location>
    <ligand>
        <name>ATP</name>
        <dbReference type="ChEBI" id="CHEBI:30616"/>
    </ligand>
</feature>
<keyword id="KW-0067">ATP-binding</keyword>
<keyword id="KW-0175">Coiled coil</keyword>
<keyword id="KW-0963">Cytoplasm</keyword>
<keyword id="KW-0206">Cytoskeleton</keyword>
<keyword id="KW-0493">Microtubule</keyword>
<keyword id="KW-0505">Motor protein</keyword>
<keyword id="KW-0547">Nucleotide-binding</keyword>
<keyword id="KW-1185">Reference proteome</keyword>
<keyword id="KW-0813">Transport</keyword>
<protein>
    <recommendedName>
        <fullName>Kinesin-related protein 11</fullName>
    </recommendedName>
    <alternativeName>
        <fullName>Kinesin family member 11</fullName>
    </alternativeName>
    <alternativeName>
        <fullName>Kinesin-7</fullName>
    </alternativeName>
</protein>
<accession>Q6S001</accession>
<accession>Q54FA2</accession>
<comment type="function">
    <text evidence="1">Microtubule-associated force-producing protein that plays a role in organelle transport. Its motor activity is directed toward the microtubule's plus end (By similarity).</text>
</comment>
<comment type="subcellular location">
    <subcellularLocation>
        <location evidence="1">Cytoplasm</location>
        <location evidence="1">Cytoskeleton</location>
    </subcellularLocation>
</comment>
<comment type="similarity">
    <text evidence="3">Belongs to the TRAFAC class myosin-kinesin ATPase superfamily. Kinesin family.</text>
</comment>
<sequence length="685" mass="75439">MNENISVSVRARPFNEKEVKDKEHCLWQFGNNNTITSLPPPITQPVSSLPPISTPIKSSSSSSTSTSAGSLKTPLKTPLKTPLKTPLKTNSTTTNTTVPASPAPTSSLTSKFVSNSYTYDHLFPPTCDNYEVYDTVARELVKSAMEGYNASIMAYGITSSGKTFTMTGSGKKNPGIIPLSIQDIFTYIQECKEREFLLRVSYLEIYNETVNDLLGVNQENFNLKIHEHPVTGVYVAGLKEEIVLSVEHVLSLISAGEAHRHVGSTSYNLQSSRSHTIFKMIIESKEVLPEGSGSGGLESPVRYSTLNLIDLAGSEKASESTISAIRNKEGSYINKSLLTLGTVISKLSEKDTGYIPYRDSKLTRVLQNSLSGNSRVAIICTITLASNNFEESHNTLKFASRAKKISNNAKVNEILDDKALLKQYRNEIAELKSKLSDALSTEKELQETLTEKEKMKITNQELLHKLVDAEKHRSLLESKINNLNKLILVSTSVNNSASKGGSGSGNGNGSRSTFVSPSQNSHHHHGDLGSITPNSFSNLLLQSPSQNNNNNSHISPLSQSTSSLTIGGGSGNGFESNELIQIQSKMAKLELELEEKNKKIDFLTSFNQDSALEKIKQLEGELVQRDMDLGLYQRESTRLQTLLSHKDEKISSLESKLRDILLKFKQIDSENTSLKSKIQEYEVMY</sequence>
<organism>
    <name type="scientific">Dictyostelium discoideum</name>
    <name type="common">Social amoeba</name>
    <dbReference type="NCBI Taxonomy" id="44689"/>
    <lineage>
        <taxon>Eukaryota</taxon>
        <taxon>Amoebozoa</taxon>
        <taxon>Evosea</taxon>
        <taxon>Eumycetozoa</taxon>
        <taxon>Dictyostelia</taxon>
        <taxon>Dictyosteliales</taxon>
        <taxon>Dictyosteliaceae</taxon>
        <taxon>Dictyostelium</taxon>
    </lineage>
</organism>
<reference key="1">
    <citation type="journal article" date="2003" name="BMC Genomics">
        <title>Identification and phylogenetic analysis of Dictyostelium discoideum kinesin proteins.</title>
        <authorList>
            <person name="Kollmar M."/>
            <person name="Gloeckner G."/>
        </authorList>
    </citation>
    <scope>NUCLEOTIDE SEQUENCE [GENOMIC DNA]</scope>
    <scope>IDENTIFICATION</scope>
    <scope>NOMENCLATURE</scope>
    <source>
        <strain>AX4</strain>
    </source>
</reference>
<reference key="2">
    <citation type="journal article" date="2005" name="Nature">
        <title>The genome of the social amoeba Dictyostelium discoideum.</title>
        <authorList>
            <person name="Eichinger L."/>
            <person name="Pachebat J.A."/>
            <person name="Gloeckner G."/>
            <person name="Rajandream M.A."/>
            <person name="Sucgang R."/>
            <person name="Berriman M."/>
            <person name="Song J."/>
            <person name="Olsen R."/>
            <person name="Szafranski K."/>
            <person name="Xu Q."/>
            <person name="Tunggal B."/>
            <person name="Kummerfeld S."/>
            <person name="Madera M."/>
            <person name="Konfortov B.A."/>
            <person name="Rivero F."/>
            <person name="Bankier A.T."/>
            <person name="Lehmann R."/>
            <person name="Hamlin N."/>
            <person name="Davies R."/>
            <person name="Gaudet P."/>
            <person name="Fey P."/>
            <person name="Pilcher K."/>
            <person name="Chen G."/>
            <person name="Saunders D."/>
            <person name="Sodergren E.J."/>
            <person name="Davis P."/>
            <person name="Kerhornou A."/>
            <person name="Nie X."/>
            <person name="Hall N."/>
            <person name="Anjard C."/>
            <person name="Hemphill L."/>
            <person name="Bason N."/>
            <person name="Farbrother P."/>
            <person name="Desany B."/>
            <person name="Just E."/>
            <person name="Morio T."/>
            <person name="Rost R."/>
            <person name="Churcher C.M."/>
            <person name="Cooper J."/>
            <person name="Haydock S."/>
            <person name="van Driessche N."/>
            <person name="Cronin A."/>
            <person name="Goodhead I."/>
            <person name="Muzny D.M."/>
            <person name="Mourier T."/>
            <person name="Pain A."/>
            <person name="Lu M."/>
            <person name="Harper D."/>
            <person name="Lindsay R."/>
            <person name="Hauser H."/>
            <person name="James K.D."/>
            <person name="Quiles M."/>
            <person name="Madan Babu M."/>
            <person name="Saito T."/>
            <person name="Buchrieser C."/>
            <person name="Wardroper A."/>
            <person name="Felder M."/>
            <person name="Thangavelu M."/>
            <person name="Johnson D."/>
            <person name="Knights A."/>
            <person name="Loulseged H."/>
            <person name="Mungall K.L."/>
            <person name="Oliver K."/>
            <person name="Price C."/>
            <person name="Quail M.A."/>
            <person name="Urushihara H."/>
            <person name="Hernandez J."/>
            <person name="Rabbinowitsch E."/>
            <person name="Steffen D."/>
            <person name="Sanders M."/>
            <person name="Ma J."/>
            <person name="Kohara Y."/>
            <person name="Sharp S."/>
            <person name="Simmonds M.N."/>
            <person name="Spiegler S."/>
            <person name="Tivey A."/>
            <person name="Sugano S."/>
            <person name="White B."/>
            <person name="Walker D."/>
            <person name="Woodward J.R."/>
            <person name="Winckler T."/>
            <person name="Tanaka Y."/>
            <person name="Shaulsky G."/>
            <person name="Schleicher M."/>
            <person name="Weinstock G.M."/>
            <person name="Rosenthal A."/>
            <person name="Cox E.C."/>
            <person name="Chisholm R.L."/>
            <person name="Gibbs R.A."/>
            <person name="Loomis W.F."/>
            <person name="Platzer M."/>
            <person name="Kay R.R."/>
            <person name="Williams J.G."/>
            <person name="Dear P.H."/>
            <person name="Noegel A.A."/>
            <person name="Barrell B.G."/>
            <person name="Kuspa A."/>
        </authorList>
    </citation>
    <scope>NUCLEOTIDE SEQUENCE [LARGE SCALE GENOMIC DNA]</scope>
    <source>
        <strain>AX4</strain>
    </source>
</reference>
<evidence type="ECO:0000250" key="1"/>
<evidence type="ECO:0000255" key="2"/>
<evidence type="ECO:0000255" key="3">
    <source>
        <dbReference type="PROSITE-ProRule" id="PRU00283"/>
    </source>
</evidence>
<evidence type="ECO:0000256" key="4">
    <source>
        <dbReference type="SAM" id="MobiDB-lite"/>
    </source>
</evidence>
<proteinExistence type="inferred from homology"/>